<protein>
    <recommendedName>
        <fullName evidence="1">DNA-binding protein Fis</fullName>
    </recommendedName>
</protein>
<accession>B1XHN0</accession>
<sequence>MFEQRVNSDVLTVSTVNSQDQVTQKPLRDSVKQALKNYFAQLNGQDVNDLYELVLAEVEQPLLDMVMQYTRGNQTRAALMMGINRGTLRKKLKKYGMN</sequence>
<feature type="chain" id="PRO_1000097452" description="DNA-binding protein Fis">
    <location>
        <begin position="1"/>
        <end position="98"/>
    </location>
</feature>
<feature type="DNA-binding region" description="H-T-H motif" evidence="1">
    <location>
        <begin position="74"/>
        <end position="93"/>
    </location>
</feature>
<comment type="function">
    <text evidence="1">Activates ribosomal RNA transcription. Plays a direct role in upstream activation of rRNA promoters.</text>
</comment>
<comment type="subunit">
    <text evidence="1">Homodimer.</text>
</comment>
<comment type="similarity">
    <text evidence="1">Belongs to the transcriptional regulatory Fis family.</text>
</comment>
<evidence type="ECO:0000255" key="1">
    <source>
        <dbReference type="HAMAP-Rule" id="MF_00166"/>
    </source>
</evidence>
<name>FIS_ECODH</name>
<organism>
    <name type="scientific">Escherichia coli (strain K12 / DH10B)</name>
    <dbReference type="NCBI Taxonomy" id="316385"/>
    <lineage>
        <taxon>Bacteria</taxon>
        <taxon>Pseudomonadati</taxon>
        <taxon>Pseudomonadota</taxon>
        <taxon>Gammaproteobacteria</taxon>
        <taxon>Enterobacterales</taxon>
        <taxon>Enterobacteriaceae</taxon>
        <taxon>Escherichia</taxon>
    </lineage>
</organism>
<proteinExistence type="inferred from homology"/>
<reference key="1">
    <citation type="journal article" date="2008" name="J. Bacteriol.">
        <title>The complete genome sequence of Escherichia coli DH10B: insights into the biology of a laboratory workhorse.</title>
        <authorList>
            <person name="Durfee T."/>
            <person name="Nelson R."/>
            <person name="Baldwin S."/>
            <person name="Plunkett G. III"/>
            <person name="Burland V."/>
            <person name="Mau B."/>
            <person name="Petrosino J.F."/>
            <person name="Qin X."/>
            <person name="Muzny D.M."/>
            <person name="Ayele M."/>
            <person name="Gibbs R.A."/>
            <person name="Csorgo B."/>
            <person name="Posfai G."/>
            <person name="Weinstock G.M."/>
            <person name="Blattner F.R."/>
        </authorList>
    </citation>
    <scope>NUCLEOTIDE SEQUENCE [LARGE SCALE GENOMIC DNA]</scope>
    <source>
        <strain>K12 / DH10B</strain>
    </source>
</reference>
<gene>
    <name evidence="1" type="primary">fis</name>
    <name type="ordered locus">ECDH10B_3436</name>
</gene>
<dbReference type="EMBL" id="CP000948">
    <property type="protein sequence ID" value="ACB04331.1"/>
    <property type="molecule type" value="Genomic_DNA"/>
</dbReference>
<dbReference type="RefSeq" id="WP_000462905.1">
    <property type="nucleotide sequence ID" value="NC_010473.1"/>
</dbReference>
<dbReference type="SMR" id="B1XHN0"/>
<dbReference type="GeneID" id="98390389"/>
<dbReference type="KEGG" id="ecd:ECDH10B_3436"/>
<dbReference type="HOGENOM" id="CLU_158040_3_0_6"/>
<dbReference type="GO" id="GO:0003700">
    <property type="term" value="F:DNA-binding transcription factor activity"/>
    <property type="evidence" value="ECO:0007669"/>
    <property type="project" value="UniProtKB-UniRule"/>
</dbReference>
<dbReference type="GO" id="GO:0043565">
    <property type="term" value="F:sequence-specific DNA binding"/>
    <property type="evidence" value="ECO:0007669"/>
    <property type="project" value="InterPro"/>
</dbReference>
<dbReference type="FunFam" id="1.10.10.60:FF:000006">
    <property type="entry name" value="DNA-binding protein Fis"/>
    <property type="match status" value="1"/>
</dbReference>
<dbReference type="Gene3D" id="1.10.10.60">
    <property type="entry name" value="Homeodomain-like"/>
    <property type="match status" value="1"/>
</dbReference>
<dbReference type="HAMAP" id="MF_00166">
    <property type="entry name" value="DNA_binding_Fis"/>
    <property type="match status" value="1"/>
</dbReference>
<dbReference type="InterPro" id="IPR005412">
    <property type="entry name" value="Fis_DNA-bd"/>
</dbReference>
<dbReference type="InterPro" id="IPR009057">
    <property type="entry name" value="Homeodomain-like_sf"/>
</dbReference>
<dbReference type="InterPro" id="IPR002197">
    <property type="entry name" value="HTH_Fis"/>
</dbReference>
<dbReference type="InterPro" id="IPR050207">
    <property type="entry name" value="Trans_regulatory_Fis"/>
</dbReference>
<dbReference type="NCBIfam" id="NF001659">
    <property type="entry name" value="PRK00430.1"/>
    <property type="match status" value="1"/>
</dbReference>
<dbReference type="PANTHER" id="PTHR47918">
    <property type="entry name" value="DNA-BINDING PROTEIN FIS"/>
    <property type="match status" value="1"/>
</dbReference>
<dbReference type="PANTHER" id="PTHR47918:SF1">
    <property type="entry name" value="DNA-BINDING PROTEIN FIS"/>
    <property type="match status" value="1"/>
</dbReference>
<dbReference type="Pfam" id="PF02954">
    <property type="entry name" value="HTH_8"/>
    <property type="match status" value="1"/>
</dbReference>
<dbReference type="PIRSF" id="PIRSF002097">
    <property type="entry name" value="DNA-binding_Fis"/>
    <property type="match status" value="1"/>
</dbReference>
<dbReference type="PRINTS" id="PR01591">
    <property type="entry name" value="DNABINDNGFIS"/>
</dbReference>
<dbReference type="PRINTS" id="PR01590">
    <property type="entry name" value="HTHFIS"/>
</dbReference>
<dbReference type="SUPFAM" id="SSF46689">
    <property type="entry name" value="Homeodomain-like"/>
    <property type="match status" value="1"/>
</dbReference>
<keyword id="KW-0010">Activator</keyword>
<keyword id="KW-0238">DNA-binding</keyword>
<keyword id="KW-0804">Transcription</keyword>
<keyword id="KW-0805">Transcription regulation</keyword>